<proteinExistence type="inferred from homology"/>
<reference key="1">
    <citation type="journal article" date="2002" name="Proc. Natl. Acad. Sci. U.S.A.">
        <title>Genome sequence of a serotype M3 strain of group A Streptococcus: phage-encoded toxins, the high-virulence phenotype, and clone emergence.</title>
        <authorList>
            <person name="Beres S.B."/>
            <person name="Sylva G.L."/>
            <person name="Barbian K.D."/>
            <person name="Lei B."/>
            <person name="Hoff J.S."/>
            <person name="Mammarella N.D."/>
            <person name="Liu M.-Y."/>
            <person name="Smoot J.C."/>
            <person name="Porcella S.F."/>
            <person name="Parkins L.D."/>
            <person name="Campbell D.S."/>
            <person name="Smith T.M."/>
            <person name="McCormick J.K."/>
            <person name="Leung D.Y.M."/>
            <person name="Schlievert P.M."/>
            <person name="Musser J.M."/>
        </authorList>
    </citation>
    <scope>NUCLEOTIDE SEQUENCE [LARGE SCALE GENOMIC DNA]</scope>
    <source>
        <strain>ATCC BAA-595 / MGAS315</strain>
    </source>
</reference>
<protein>
    <recommendedName>
        <fullName evidence="1">Thymidylate kinase</fullName>
        <ecNumber evidence="1">2.7.4.9</ecNumber>
    </recommendedName>
    <alternativeName>
        <fullName evidence="1">dTMP kinase</fullName>
    </alternativeName>
</protein>
<dbReference type="EC" id="2.7.4.9" evidence="1"/>
<dbReference type="EMBL" id="AE014074">
    <property type="protein sequence ID" value="AAM78896.1"/>
    <property type="molecule type" value="Genomic_DNA"/>
</dbReference>
<dbReference type="RefSeq" id="WP_011054219.1">
    <property type="nucleotide sequence ID" value="NC_004070.1"/>
</dbReference>
<dbReference type="SMR" id="P0DC02"/>
<dbReference type="KEGG" id="spg:SpyM3_0289"/>
<dbReference type="HOGENOM" id="CLU_049131_0_2_9"/>
<dbReference type="Proteomes" id="UP000000564">
    <property type="component" value="Chromosome"/>
</dbReference>
<dbReference type="GO" id="GO:0005829">
    <property type="term" value="C:cytosol"/>
    <property type="evidence" value="ECO:0007669"/>
    <property type="project" value="TreeGrafter"/>
</dbReference>
<dbReference type="GO" id="GO:0005524">
    <property type="term" value="F:ATP binding"/>
    <property type="evidence" value="ECO:0007669"/>
    <property type="project" value="UniProtKB-UniRule"/>
</dbReference>
<dbReference type="GO" id="GO:0004798">
    <property type="term" value="F:dTMP kinase activity"/>
    <property type="evidence" value="ECO:0007669"/>
    <property type="project" value="UniProtKB-UniRule"/>
</dbReference>
<dbReference type="GO" id="GO:0006233">
    <property type="term" value="P:dTDP biosynthetic process"/>
    <property type="evidence" value="ECO:0007669"/>
    <property type="project" value="InterPro"/>
</dbReference>
<dbReference type="GO" id="GO:0006235">
    <property type="term" value="P:dTTP biosynthetic process"/>
    <property type="evidence" value="ECO:0007669"/>
    <property type="project" value="UniProtKB-UniRule"/>
</dbReference>
<dbReference type="GO" id="GO:0006227">
    <property type="term" value="P:dUDP biosynthetic process"/>
    <property type="evidence" value="ECO:0007669"/>
    <property type="project" value="TreeGrafter"/>
</dbReference>
<dbReference type="CDD" id="cd01672">
    <property type="entry name" value="TMPK"/>
    <property type="match status" value="1"/>
</dbReference>
<dbReference type="FunFam" id="3.40.50.300:FF:000225">
    <property type="entry name" value="Thymidylate kinase"/>
    <property type="match status" value="1"/>
</dbReference>
<dbReference type="Gene3D" id="3.40.50.300">
    <property type="entry name" value="P-loop containing nucleotide triphosphate hydrolases"/>
    <property type="match status" value="1"/>
</dbReference>
<dbReference type="HAMAP" id="MF_00165">
    <property type="entry name" value="Thymidylate_kinase"/>
    <property type="match status" value="1"/>
</dbReference>
<dbReference type="InterPro" id="IPR027417">
    <property type="entry name" value="P-loop_NTPase"/>
</dbReference>
<dbReference type="InterPro" id="IPR039430">
    <property type="entry name" value="Thymidylate_kin-like_dom"/>
</dbReference>
<dbReference type="InterPro" id="IPR018094">
    <property type="entry name" value="Thymidylate_kinase"/>
</dbReference>
<dbReference type="NCBIfam" id="TIGR00041">
    <property type="entry name" value="DTMP_kinase"/>
    <property type="match status" value="1"/>
</dbReference>
<dbReference type="PANTHER" id="PTHR10344">
    <property type="entry name" value="THYMIDYLATE KINASE"/>
    <property type="match status" value="1"/>
</dbReference>
<dbReference type="PANTHER" id="PTHR10344:SF4">
    <property type="entry name" value="UMP-CMP KINASE 2, MITOCHONDRIAL"/>
    <property type="match status" value="1"/>
</dbReference>
<dbReference type="Pfam" id="PF02223">
    <property type="entry name" value="Thymidylate_kin"/>
    <property type="match status" value="1"/>
</dbReference>
<dbReference type="SUPFAM" id="SSF52540">
    <property type="entry name" value="P-loop containing nucleoside triphosphate hydrolases"/>
    <property type="match status" value="1"/>
</dbReference>
<evidence type="ECO:0000255" key="1">
    <source>
        <dbReference type="HAMAP-Rule" id="MF_00165"/>
    </source>
</evidence>
<gene>
    <name evidence="1" type="primary">tmk</name>
    <name type="ordered locus">SpyM3_0289</name>
</gene>
<name>KTHY_STRP3</name>
<feature type="chain" id="PRO_0000155352" description="Thymidylate kinase">
    <location>
        <begin position="1"/>
        <end position="211"/>
    </location>
</feature>
<feature type="binding site" evidence="1">
    <location>
        <begin position="11"/>
        <end position="18"/>
    </location>
    <ligand>
        <name>ATP</name>
        <dbReference type="ChEBI" id="CHEBI:30616"/>
    </ligand>
</feature>
<keyword id="KW-0067">ATP-binding</keyword>
<keyword id="KW-0418">Kinase</keyword>
<keyword id="KW-0545">Nucleotide biosynthesis</keyword>
<keyword id="KW-0547">Nucleotide-binding</keyword>
<keyword id="KW-0808">Transferase</keyword>
<accession>P0DC02</accession>
<accession>Q8K8H4</accession>
<comment type="function">
    <text evidence="1">Phosphorylation of dTMP to form dTDP in both de novo and salvage pathways of dTTP synthesis.</text>
</comment>
<comment type="catalytic activity">
    <reaction evidence="1">
        <text>dTMP + ATP = dTDP + ADP</text>
        <dbReference type="Rhea" id="RHEA:13517"/>
        <dbReference type="ChEBI" id="CHEBI:30616"/>
        <dbReference type="ChEBI" id="CHEBI:58369"/>
        <dbReference type="ChEBI" id="CHEBI:63528"/>
        <dbReference type="ChEBI" id="CHEBI:456216"/>
        <dbReference type="EC" id="2.7.4.9"/>
    </reaction>
</comment>
<comment type="similarity">
    <text evidence="1">Belongs to the thymidylate kinase family.</text>
</comment>
<sequence>MITGKLITVEGPDGAGKTTVLEQLIPLLKQKVAQEILTTREPGGVAISEYIRELILDINHTTMDPKTELLLYIAARRQHLVEKVLPALEAGQLVFIDRFIDSSVAYQGAGRGLIKADIQWLNEFATDGLEPDLTLYFDVPSEIGLARINANQQREVNRLDLETIEIHQRVRKGYLALAKEHPKRIVTIDATKPLKEVVSVALEHVLTLLLA</sequence>
<organism>
    <name type="scientific">Streptococcus pyogenes serotype M3 (strain ATCC BAA-595 / MGAS315)</name>
    <dbReference type="NCBI Taxonomy" id="198466"/>
    <lineage>
        <taxon>Bacteria</taxon>
        <taxon>Bacillati</taxon>
        <taxon>Bacillota</taxon>
        <taxon>Bacilli</taxon>
        <taxon>Lactobacillales</taxon>
        <taxon>Streptococcaceae</taxon>
        <taxon>Streptococcus</taxon>
    </lineage>
</organism>